<organism>
    <name type="scientific">Hylobates lar</name>
    <name type="common">Lar gibbon</name>
    <name type="synonym">White-handed gibbon</name>
    <dbReference type="NCBI Taxonomy" id="9580"/>
    <lineage>
        <taxon>Eukaryota</taxon>
        <taxon>Metazoa</taxon>
        <taxon>Chordata</taxon>
        <taxon>Craniata</taxon>
        <taxon>Vertebrata</taxon>
        <taxon>Euteleostomi</taxon>
        <taxon>Mammalia</taxon>
        <taxon>Eutheria</taxon>
        <taxon>Euarchontoglires</taxon>
        <taxon>Primates</taxon>
        <taxon>Haplorrhini</taxon>
        <taxon>Catarrhini</taxon>
        <taxon>Hylobatidae</taxon>
        <taxon>Hylobates</taxon>
    </lineage>
</organism>
<protein>
    <recommendedName>
        <fullName evidence="2">Glutathione peroxidase 3</fullName>
        <shortName>GPx-3</shortName>
        <shortName>GSHPx-3</shortName>
        <ecNumber evidence="2">1.11.1.9</ecNumber>
    </recommendedName>
    <alternativeName>
        <fullName>Plasma glutathione peroxidase</fullName>
        <shortName>GPx-P</shortName>
        <shortName>GSHPx-P</shortName>
    </alternativeName>
</protein>
<comment type="function">
    <text evidence="2">Protects cells and enzymes from oxidative damage, by catalyzing the reduction of hydrogen peroxide, lipid peroxides and organic hydroperoxide, by glutathione.</text>
</comment>
<comment type="catalytic activity">
    <reaction evidence="2">
        <text>2 glutathione + H2O2 = glutathione disulfide + 2 H2O</text>
        <dbReference type="Rhea" id="RHEA:16833"/>
        <dbReference type="ChEBI" id="CHEBI:15377"/>
        <dbReference type="ChEBI" id="CHEBI:16240"/>
        <dbReference type="ChEBI" id="CHEBI:57925"/>
        <dbReference type="ChEBI" id="CHEBI:58297"/>
        <dbReference type="EC" id="1.11.1.9"/>
    </reaction>
</comment>
<comment type="catalytic activity">
    <reaction evidence="2">
        <text>tert-butyl hydroperoxide + 2 glutathione = tert-butanol + glutathione disulfide + H2O</text>
        <dbReference type="Rhea" id="RHEA:69412"/>
        <dbReference type="ChEBI" id="CHEBI:15377"/>
        <dbReference type="ChEBI" id="CHEBI:45895"/>
        <dbReference type="ChEBI" id="CHEBI:57925"/>
        <dbReference type="ChEBI" id="CHEBI:58297"/>
        <dbReference type="ChEBI" id="CHEBI:64090"/>
    </reaction>
</comment>
<comment type="subunit">
    <text evidence="1">Homotetramer.</text>
</comment>
<comment type="subcellular location">
    <subcellularLocation>
        <location evidence="1">Secreted</location>
    </subcellularLocation>
</comment>
<comment type="tissue specificity">
    <text>Secreted in plasma.</text>
</comment>
<comment type="similarity">
    <text evidence="4">Belongs to the glutathione peroxidase family.</text>
</comment>
<dbReference type="EC" id="1.11.1.9" evidence="2"/>
<dbReference type="EMBL" id="AB121007">
    <property type="protein sequence ID" value="BAE17015.1"/>
    <property type="molecule type" value="mRNA"/>
</dbReference>
<dbReference type="PeroxiBase" id="3698">
    <property type="entry name" value="HlGPx03"/>
</dbReference>
<dbReference type="GO" id="GO:0005615">
    <property type="term" value="C:extracellular space"/>
    <property type="evidence" value="ECO:0000250"/>
    <property type="project" value="UniProtKB"/>
</dbReference>
<dbReference type="GO" id="GO:0004602">
    <property type="term" value="F:glutathione peroxidase activity"/>
    <property type="evidence" value="ECO:0000250"/>
    <property type="project" value="UniProtKB"/>
</dbReference>
<dbReference type="GO" id="GO:0042802">
    <property type="term" value="F:identical protein binding"/>
    <property type="evidence" value="ECO:0000250"/>
    <property type="project" value="UniProtKB"/>
</dbReference>
<dbReference type="GO" id="GO:0008430">
    <property type="term" value="F:selenium binding"/>
    <property type="evidence" value="ECO:0000250"/>
    <property type="project" value="UniProtKB"/>
</dbReference>
<dbReference type="GO" id="GO:0042744">
    <property type="term" value="P:hydrogen peroxide catabolic process"/>
    <property type="evidence" value="ECO:0007669"/>
    <property type="project" value="TreeGrafter"/>
</dbReference>
<dbReference type="GO" id="GO:0006979">
    <property type="term" value="P:response to oxidative stress"/>
    <property type="evidence" value="ECO:0007669"/>
    <property type="project" value="InterPro"/>
</dbReference>
<dbReference type="CDD" id="cd00340">
    <property type="entry name" value="GSH_Peroxidase"/>
    <property type="match status" value="1"/>
</dbReference>
<dbReference type="FunFam" id="3.40.30.10:FF:000112">
    <property type="entry name" value="Glutathione peroxidase"/>
    <property type="match status" value="1"/>
</dbReference>
<dbReference type="Gene3D" id="3.40.30.10">
    <property type="entry name" value="Glutaredoxin"/>
    <property type="match status" value="1"/>
</dbReference>
<dbReference type="InterPro" id="IPR000889">
    <property type="entry name" value="Glutathione_peroxidase"/>
</dbReference>
<dbReference type="InterPro" id="IPR029759">
    <property type="entry name" value="GPX_AS"/>
</dbReference>
<dbReference type="InterPro" id="IPR029760">
    <property type="entry name" value="GPX_CS"/>
</dbReference>
<dbReference type="InterPro" id="IPR036249">
    <property type="entry name" value="Thioredoxin-like_sf"/>
</dbReference>
<dbReference type="PANTHER" id="PTHR11592">
    <property type="entry name" value="GLUTATHIONE PEROXIDASE"/>
    <property type="match status" value="1"/>
</dbReference>
<dbReference type="PANTHER" id="PTHR11592:SF32">
    <property type="entry name" value="GLUTATHIONE PEROXIDASE 3"/>
    <property type="match status" value="1"/>
</dbReference>
<dbReference type="Pfam" id="PF00255">
    <property type="entry name" value="GSHPx"/>
    <property type="match status" value="1"/>
</dbReference>
<dbReference type="PIRSF" id="PIRSF000303">
    <property type="entry name" value="Glutathion_perox"/>
    <property type="match status" value="1"/>
</dbReference>
<dbReference type="PRINTS" id="PR01011">
    <property type="entry name" value="GLUTPROXDASE"/>
</dbReference>
<dbReference type="SUPFAM" id="SSF52833">
    <property type="entry name" value="Thioredoxin-like"/>
    <property type="match status" value="1"/>
</dbReference>
<dbReference type="PROSITE" id="PS00460">
    <property type="entry name" value="GLUTATHIONE_PEROXID_1"/>
    <property type="match status" value="1"/>
</dbReference>
<dbReference type="PROSITE" id="PS00763">
    <property type="entry name" value="GLUTATHIONE_PEROXID_2"/>
    <property type="match status" value="1"/>
</dbReference>
<dbReference type="PROSITE" id="PS51355">
    <property type="entry name" value="GLUTATHIONE_PEROXID_3"/>
    <property type="match status" value="1"/>
</dbReference>
<name>GPX3_HYLLA</name>
<feature type="signal peptide" evidence="3">
    <location>
        <begin position="1"/>
        <end position="24"/>
    </location>
</feature>
<feature type="chain" id="PRO_0000042605" description="Glutathione peroxidase 3">
    <location>
        <begin position="25"/>
        <end position="226"/>
    </location>
</feature>
<feature type="active site" evidence="1">
    <location>
        <position position="73"/>
    </location>
</feature>
<feature type="non-standard amino acid" description="Selenocysteine">
    <location>
        <position position="73"/>
    </location>
</feature>
<evidence type="ECO:0000250" key="1"/>
<evidence type="ECO:0000250" key="2">
    <source>
        <dbReference type="UniProtKB" id="P22352"/>
    </source>
</evidence>
<evidence type="ECO:0000255" key="3"/>
<evidence type="ECO:0000305" key="4"/>
<sequence length="226" mass="25598">MARLLQASCLLSLLLAGFVPQSRGQEKSKMDCHGGMSSTIYEYGALTIDGEEYIPFKQYAGKYVLFVNVASYUGLTGQYIELNALQEELAPFGLVILGFPCNQFGKQEPGENSEILPTLKYVRPGGGFVPNFQLFEKGDVNGEKEQKFYTFLKNSCPPTSELLGTSDRLFWEPMKVHDIRWNFEKFLVGPDGTPIMRWHHRTTVSNVKMDILSYMRRQAALGVKRK</sequence>
<reference key="1">
    <citation type="journal article" date="2005" name="Comp. Biochem. Physiol.">
        <title>Structure, gene expression, and evolution of primate glutathione peroxidases.</title>
        <authorList>
            <person name="Fukuhara R."/>
            <person name="Kageyama T."/>
        </authorList>
    </citation>
    <scope>NUCLEOTIDE SEQUENCE [MRNA]</scope>
</reference>
<proteinExistence type="evidence at transcript level"/>
<keyword id="KW-0560">Oxidoreductase</keyword>
<keyword id="KW-0575">Peroxidase</keyword>
<keyword id="KW-0964">Secreted</keyword>
<keyword id="KW-0712">Selenocysteine</keyword>
<keyword id="KW-0732">Signal</keyword>
<gene>
    <name evidence="2" type="primary">GPX3</name>
</gene>
<accession>Q4AEH5</accession>